<comment type="function">
    <text evidence="4">Collaboratively with BKN2/SZE2, involved in compatible pollen-stigma interactions.</text>
</comment>
<comment type="subcellular location">
    <subcellularLocation>
        <location evidence="4">Cell membrane</location>
        <topology evidence="4">Lipid-anchor</topology>
        <orientation evidence="2">Cytoplasmic side</orientation>
    </subcellularLocation>
    <subcellularLocation>
        <location evidence="4">Nucleus</location>
    </subcellularLocation>
    <text evidence="4">Partial observation into the nucleus.</text>
</comment>
<comment type="alternative products">
    <event type="alternative splicing"/>
    <isoform>
        <id>Q9LFL7-1</id>
        <name>1</name>
        <sequence type="displayed"/>
    </isoform>
    <text>A number of isoforms are produced. According to EST sequences.</text>
</comment>
<comment type="tissue specificity">
    <text evidence="4">Restricted to stigma in flowers.</text>
</comment>
<comment type="developmental stage">
    <text evidence="4">Expressed in stigmas from flowers across developmental stages.</text>
</comment>
<comment type="domain">
    <text evidence="3">The protein kinase domain is predicted to be catalytically inactive.</text>
</comment>
<comment type="disruption phenotype">
    <text evidence="4">No visible phenotype (PubMed:31829135). Slight hydration defects of wild-type pollen placed on the stigma of plants lacking both BKN1 and BKN2, but normal pollen grain adhesion and pollen tube growth (PubMed:31829135).</text>
</comment>
<comment type="similarity">
    <text evidence="3">Belongs to the protein kinase superfamily. Ser/Thr protein kinase family.</text>
</comment>
<comment type="sequence caution" evidence="6">
    <conflict type="frameshift">
        <sequence resource="EMBL-CDS" id="ABE66152"/>
    </conflict>
</comment>
<comment type="sequence caution" evidence="6">
    <conflict type="erroneous gene model prediction">
        <sequence resource="EMBL-CDS" id="AED91673"/>
    </conflict>
</comment>
<comment type="sequence caution" evidence="6">
    <conflict type="frameshift">
        <sequence resource="EMBL-CDS" id="AED91673"/>
    </conflict>
</comment>
<comment type="sequence caution" evidence="6">
    <conflict type="erroneous gene model prediction">
        <sequence resource="EMBL-CDS" id="CAB96675"/>
    </conflict>
</comment>
<comment type="sequence caution" evidence="6">
    <conflict type="frameshift">
        <sequence resource="EMBL-CDS" id="CAB96675"/>
    </conflict>
</comment>
<reference key="1">
    <citation type="journal article" date="2000" name="Nature">
        <title>Sequence and analysis of chromosome 5 of the plant Arabidopsis thaliana.</title>
        <authorList>
            <person name="Tabata S."/>
            <person name="Kaneko T."/>
            <person name="Nakamura Y."/>
            <person name="Kotani H."/>
            <person name="Kato T."/>
            <person name="Asamizu E."/>
            <person name="Miyajima N."/>
            <person name="Sasamoto S."/>
            <person name="Kimura T."/>
            <person name="Hosouchi T."/>
            <person name="Kawashima K."/>
            <person name="Kohara M."/>
            <person name="Matsumoto M."/>
            <person name="Matsuno A."/>
            <person name="Muraki A."/>
            <person name="Nakayama S."/>
            <person name="Nakazaki N."/>
            <person name="Naruo K."/>
            <person name="Okumura S."/>
            <person name="Shinpo S."/>
            <person name="Takeuchi C."/>
            <person name="Wada T."/>
            <person name="Watanabe A."/>
            <person name="Yamada M."/>
            <person name="Yasuda M."/>
            <person name="Sato S."/>
            <person name="de la Bastide M."/>
            <person name="Huang E."/>
            <person name="Spiegel L."/>
            <person name="Gnoj L."/>
            <person name="O'Shaughnessy A."/>
            <person name="Preston R."/>
            <person name="Habermann K."/>
            <person name="Murray J."/>
            <person name="Johnson D."/>
            <person name="Rohlfing T."/>
            <person name="Nelson J."/>
            <person name="Stoneking T."/>
            <person name="Pepin K."/>
            <person name="Spieth J."/>
            <person name="Sekhon M."/>
            <person name="Armstrong J."/>
            <person name="Becker M."/>
            <person name="Belter E."/>
            <person name="Cordum H."/>
            <person name="Cordes M."/>
            <person name="Courtney L."/>
            <person name="Courtney W."/>
            <person name="Dante M."/>
            <person name="Du H."/>
            <person name="Edwards J."/>
            <person name="Fryman J."/>
            <person name="Haakensen B."/>
            <person name="Lamar E."/>
            <person name="Latreille P."/>
            <person name="Leonard S."/>
            <person name="Meyer R."/>
            <person name="Mulvaney E."/>
            <person name="Ozersky P."/>
            <person name="Riley A."/>
            <person name="Strowmatt C."/>
            <person name="Wagner-McPherson C."/>
            <person name="Wollam A."/>
            <person name="Yoakum M."/>
            <person name="Bell M."/>
            <person name="Dedhia N."/>
            <person name="Parnell L."/>
            <person name="Shah R."/>
            <person name="Rodriguez M."/>
            <person name="Hoon See L."/>
            <person name="Vil D."/>
            <person name="Baker J."/>
            <person name="Kirchoff K."/>
            <person name="Toth K."/>
            <person name="King L."/>
            <person name="Bahret A."/>
            <person name="Miller B."/>
            <person name="Marra M.A."/>
            <person name="Martienssen R."/>
            <person name="McCombie W.R."/>
            <person name="Wilson R.K."/>
            <person name="Murphy G."/>
            <person name="Bancroft I."/>
            <person name="Volckaert G."/>
            <person name="Wambutt R."/>
            <person name="Duesterhoeft A."/>
            <person name="Stiekema W."/>
            <person name="Pohl T."/>
            <person name="Entian K.-D."/>
            <person name="Terryn N."/>
            <person name="Hartley N."/>
            <person name="Bent E."/>
            <person name="Johnson S."/>
            <person name="Langham S.-A."/>
            <person name="McCullagh B."/>
            <person name="Robben J."/>
            <person name="Grymonprez B."/>
            <person name="Zimmermann W."/>
            <person name="Ramsperger U."/>
            <person name="Wedler H."/>
            <person name="Balke K."/>
            <person name="Wedler E."/>
            <person name="Peters S."/>
            <person name="van Staveren M."/>
            <person name="Dirkse W."/>
            <person name="Mooijman P."/>
            <person name="Klein Lankhorst R."/>
            <person name="Weitzenegger T."/>
            <person name="Bothe G."/>
            <person name="Rose M."/>
            <person name="Hauf J."/>
            <person name="Berneiser S."/>
            <person name="Hempel S."/>
            <person name="Feldpausch M."/>
            <person name="Lamberth S."/>
            <person name="Villarroel R."/>
            <person name="Gielen J."/>
            <person name="Ardiles W."/>
            <person name="Bents O."/>
            <person name="Lemcke K."/>
            <person name="Kolesov G."/>
            <person name="Mayer K.F.X."/>
            <person name="Rudd S."/>
            <person name="Schoof H."/>
            <person name="Schueller C."/>
            <person name="Zaccaria P."/>
            <person name="Mewes H.-W."/>
            <person name="Bevan M."/>
            <person name="Fransz P.F."/>
        </authorList>
    </citation>
    <scope>NUCLEOTIDE SEQUENCE [LARGE SCALE GENOMIC DNA]</scope>
    <source>
        <strain>cv. Columbia</strain>
    </source>
</reference>
<reference key="2">
    <citation type="journal article" date="2017" name="Plant J.">
        <title>Araport11: a complete reannotation of the Arabidopsis thaliana reference genome.</title>
        <authorList>
            <person name="Cheng C.Y."/>
            <person name="Krishnakumar V."/>
            <person name="Chan A.P."/>
            <person name="Thibaud-Nissen F."/>
            <person name="Schobel S."/>
            <person name="Town C.D."/>
        </authorList>
    </citation>
    <scope>GENOME REANNOTATION</scope>
    <source>
        <strain>cv. Columbia</strain>
    </source>
</reference>
<reference key="3">
    <citation type="journal article" date="2006" name="Plant Biotechnol. J.">
        <title>Simultaneous high-throughput recombinational cloning of open reading frames in closed and open configurations.</title>
        <authorList>
            <person name="Underwood B.A."/>
            <person name="Vanderhaeghen R."/>
            <person name="Whitford R."/>
            <person name="Town C.D."/>
            <person name="Hilson P."/>
        </authorList>
    </citation>
    <scope>NUCLEOTIDE SEQUENCE [LARGE SCALE MRNA]</scope>
    <source>
        <strain>cv. Columbia</strain>
    </source>
</reference>
<reference key="4">
    <citation type="journal article" date="2019" name="BMC Plant Biol.">
        <title>Investigations into a putative role for the novel BRASSIKIN pseudokinases in compatible pollen-stigma interactions in Arabidopsis thaliana.</title>
        <authorList>
            <person name="Doucet J."/>
            <person name="Lee H.K."/>
            <person name="Udugama N."/>
            <person name="Xu J."/>
            <person name="Qi B."/>
            <person name="Goring D.R."/>
        </authorList>
    </citation>
    <scope>FUNCTION</scope>
    <scope>DISRUPTION PHENOTYPE</scope>
    <scope>TISSUE SPECIFICITY</scope>
    <scope>DEVELOPMENTAL STAGE</scope>
    <scope>SUBCELLULAR LOCATION</scope>
    <source>
        <strain>cv. Columbia</strain>
    </source>
</reference>
<name>BKN1_ARATH</name>
<feature type="initiator methionine" description="Removed" evidence="4">
    <location>
        <position position="1"/>
    </location>
</feature>
<feature type="chain" id="PRO_0000403339" description="Inactive serine/threonine-protein kinase BKN1">
    <location>
        <begin position="2"/>
        <end position="331"/>
    </location>
</feature>
<feature type="domain" description="Protein kinase" evidence="3">
    <location>
        <begin position="58"/>
        <end position="328"/>
    </location>
</feature>
<feature type="lipid moiety-binding region" description="N-myristoyl glycine" evidence="1">
    <location>
        <position position="2"/>
    </location>
</feature>
<feature type="lipid moiety-binding region" description="S-palmitoyl cysteine" evidence="1">
    <location>
        <position position="4"/>
    </location>
</feature>
<organism>
    <name type="scientific">Arabidopsis thaliana</name>
    <name type="common">Mouse-ear cress</name>
    <dbReference type="NCBI Taxonomy" id="3702"/>
    <lineage>
        <taxon>Eukaryota</taxon>
        <taxon>Viridiplantae</taxon>
        <taxon>Streptophyta</taxon>
        <taxon>Embryophyta</taxon>
        <taxon>Tracheophyta</taxon>
        <taxon>Spermatophyta</taxon>
        <taxon>Magnoliopsida</taxon>
        <taxon>eudicotyledons</taxon>
        <taxon>Gunneridae</taxon>
        <taxon>Pentapetalae</taxon>
        <taxon>rosids</taxon>
        <taxon>malvids</taxon>
        <taxon>Brassicales</taxon>
        <taxon>Brassicaceae</taxon>
        <taxon>Camelineae</taxon>
        <taxon>Arabidopsis</taxon>
    </lineage>
</organism>
<keyword id="KW-0025">Alternative splicing</keyword>
<keyword id="KW-1003">Cell membrane</keyword>
<keyword id="KW-0449">Lipoprotein</keyword>
<keyword id="KW-0472">Membrane</keyword>
<keyword id="KW-0519">Myristate</keyword>
<keyword id="KW-0539">Nucleus</keyword>
<keyword id="KW-0564">Palmitate</keyword>
<keyword id="KW-1185">Reference proteome</keyword>
<sequence length="331" mass="37870">MGNCLKHFKQQLPSIAPKPLIIPPIFSARKRESESLQIRGLKKATKKFRQDRVVECEDYSVRKFYKGYIDETTFAPSRAGTGIAVSVMECDSSRSLQDWMAVVRSLGQLSHQNLVNFLGYCCEDNKPFFLVFEYSHKGSLDSHIFGKEEEALPWEIRVKIAIGTAQGLAFLHSIKNSPLNRELRMHNIMLDEQYNAKLFYLEPTKRSLVDEGLKRGRFTYLSPEWGSLGILDMTTDVYIFGMILLELLMGSKDRKKIKEEQGLVDYWTSSFLPDNYKIEEIIDPRLGSDYSANAATQMGTLINRCTAHNTKKRPLMQQVLDGLNHIAEIKD</sequence>
<evidence type="ECO:0000250" key="1">
    <source>
        <dbReference type="UniProtKB" id="Q9LFL6"/>
    </source>
</evidence>
<evidence type="ECO:0000255" key="2"/>
<evidence type="ECO:0000255" key="3">
    <source>
        <dbReference type="PROSITE-ProRule" id="PRU00159"/>
    </source>
</evidence>
<evidence type="ECO:0000269" key="4">
    <source>
    </source>
</evidence>
<evidence type="ECO:0000303" key="5">
    <source>
    </source>
</evidence>
<evidence type="ECO:0000305" key="6"/>
<evidence type="ECO:0000312" key="7">
    <source>
        <dbReference type="Araport" id="AT5G11400"/>
    </source>
</evidence>
<evidence type="ECO:0000312" key="8">
    <source>
        <dbReference type="EMBL" id="CAB96675.1"/>
    </source>
</evidence>
<gene>
    <name evidence="5" type="primary">BKN1</name>
    <name evidence="7" type="ordered locus">At5g11400</name>
    <name evidence="8" type="ORF">F2I11.290</name>
</gene>
<protein>
    <recommendedName>
        <fullName evidence="6">Inactive serine/threonine-protein kinase BKN1</fullName>
    </recommendedName>
    <alternativeName>
        <fullName evidence="5">Pseudokinase BRASSIKIN 1</fullName>
    </alternativeName>
</protein>
<accession>Q9LFL7</accession>
<accession>F4JXU6</accession>
<accession>Q1PDX7</accession>
<proteinExistence type="evidence at transcript level"/>
<dbReference type="EMBL" id="AL360314">
    <property type="protein sequence ID" value="CAB96675.1"/>
    <property type="status" value="ALT_SEQ"/>
    <property type="molecule type" value="Genomic_DNA"/>
</dbReference>
<dbReference type="EMBL" id="CP002688">
    <property type="protein sequence ID" value="AED91673.1"/>
    <property type="status" value="ALT_SEQ"/>
    <property type="molecule type" value="Genomic_DNA"/>
</dbReference>
<dbReference type="EMBL" id="DQ446941">
    <property type="protein sequence ID" value="ABE66152.1"/>
    <property type="status" value="ALT_FRAME"/>
    <property type="molecule type" value="mRNA"/>
</dbReference>
<dbReference type="RefSeq" id="NP_001190289.1">
    <property type="nucleotide sequence ID" value="NM_001203360.1"/>
</dbReference>
<dbReference type="SMR" id="Q9LFL7"/>
<dbReference type="FunCoup" id="Q9LFL7">
    <property type="interactions" value="2"/>
</dbReference>
<dbReference type="STRING" id="3702.Q9LFL7"/>
<dbReference type="PaxDb" id="3702-AT5G11400.2"/>
<dbReference type="GeneID" id="831011"/>
<dbReference type="KEGG" id="ath:AT5G11400"/>
<dbReference type="Araport" id="AT5G11400"/>
<dbReference type="TAIR" id="AT5G11400">
    <property type="gene designation" value="BKN1"/>
</dbReference>
<dbReference type="eggNOG" id="KOG1187">
    <property type="taxonomic scope" value="Eukaryota"/>
</dbReference>
<dbReference type="InParanoid" id="Q9LFL7"/>
<dbReference type="PRO" id="PR:Q9LFL7"/>
<dbReference type="Proteomes" id="UP000006548">
    <property type="component" value="Chromosome 5"/>
</dbReference>
<dbReference type="ExpressionAtlas" id="Q9LFL7">
    <property type="expression patterns" value="baseline and differential"/>
</dbReference>
<dbReference type="GO" id="GO:0005634">
    <property type="term" value="C:nucleus"/>
    <property type="evidence" value="ECO:0007669"/>
    <property type="project" value="UniProtKB-SubCell"/>
</dbReference>
<dbReference type="GO" id="GO:0005886">
    <property type="term" value="C:plasma membrane"/>
    <property type="evidence" value="ECO:0000314"/>
    <property type="project" value="UniProtKB"/>
</dbReference>
<dbReference type="GO" id="GO:0005524">
    <property type="term" value="F:ATP binding"/>
    <property type="evidence" value="ECO:0007669"/>
    <property type="project" value="InterPro"/>
</dbReference>
<dbReference type="GO" id="GO:0004672">
    <property type="term" value="F:protein kinase activity"/>
    <property type="evidence" value="ECO:0007669"/>
    <property type="project" value="InterPro"/>
</dbReference>
<dbReference type="GO" id="GO:0140301">
    <property type="term" value="P:pollen-stigma interaction"/>
    <property type="evidence" value="ECO:0000316"/>
    <property type="project" value="TAIR"/>
</dbReference>
<dbReference type="Gene3D" id="3.30.200.20">
    <property type="entry name" value="Phosphorylase Kinase, domain 1"/>
    <property type="match status" value="1"/>
</dbReference>
<dbReference type="Gene3D" id="1.10.510.10">
    <property type="entry name" value="Transferase(Phosphotransferase) domain 1"/>
    <property type="match status" value="1"/>
</dbReference>
<dbReference type="InterPro" id="IPR011009">
    <property type="entry name" value="Kinase-like_dom_sf"/>
</dbReference>
<dbReference type="InterPro" id="IPR050823">
    <property type="entry name" value="Plant_Ser_Thr_Prot_Kinase"/>
</dbReference>
<dbReference type="InterPro" id="IPR000719">
    <property type="entry name" value="Prot_kinase_dom"/>
</dbReference>
<dbReference type="InterPro" id="IPR001245">
    <property type="entry name" value="Ser-Thr/Tyr_kinase_cat_dom"/>
</dbReference>
<dbReference type="PANTHER" id="PTHR45621">
    <property type="entry name" value="OS01G0588500 PROTEIN-RELATED"/>
    <property type="match status" value="1"/>
</dbReference>
<dbReference type="Pfam" id="PF07714">
    <property type="entry name" value="PK_Tyr_Ser-Thr"/>
    <property type="match status" value="1"/>
</dbReference>
<dbReference type="SUPFAM" id="SSF56112">
    <property type="entry name" value="Protein kinase-like (PK-like)"/>
    <property type="match status" value="1"/>
</dbReference>
<dbReference type="PROSITE" id="PS50011">
    <property type="entry name" value="PROTEIN_KINASE_DOM"/>
    <property type="match status" value="1"/>
</dbReference>